<protein>
    <recommendedName>
        <fullName evidence="1">Xaa-Pro dipeptidase</fullName>
        <shortName evidence="1">X-Pro dipeptidase</shortName>
        <ecNumber evidence="1">3.4.13.9</ecNumber>
    </recommendedName>
    <alternativeName>
        <fullName evidence="1">Imidodipeptidase</fullName>
    </alternativeName>
    <alternativeName>
        <fullName evidence="1">Proline dipeptidase</fullName>
        <shortName evidence="1">Prolidase</shortName>
    </alternativeName>
</protein>
<comment type="function">
    <text evidence="1">Splits dipeptides with a prolyl residue in the C-terminal position.</text>
</comment>
<comment type="catalytic activity">
    <reaction evidence="1">
        <text>Xaa-L-Pro dipeptide + H2O = an L-alpha-amino acid + L-proline</text>
        <dbReference type="Rhea" id="RHEA:76407"/>
        <dbReference type="ChEBI" id="CHEBI:15377"/>
        <dbReference type="ChEBI" id="CHEBI:59869"/>
        <dbReference type="ChEBI" id="CHEBI:60039"/>
        <dbReference type="ChEBI" id="CHEBI:195196"/>
        <dbReference type="EC" id="3.4.13.9"/>
    </reaction>
</comment>
<comment type="cofactor">
    <cofactor evidence="1">
        <name>Mn(2+)</name>
        <dbReference type="ChEBI" id="CHEBI:29035"/>
    </cofactor>
    <text evidence="1">Binds 2 manganese ions per subunit.</text>
</comment>
<comment type="similarity">
    <text evidence="1">Belongs to the peptidase M24B family. Bacterial-type prolidase subfamily.</text>
</comment>
<name>PEPQ_SALDC</name>
<feature type="chain" id="PRO_1000140324" description="Xaa-Pro dipeptidase">
    <location>
        <begin position="1"/>
        <end position="443"/>
    </location>
</feature>
<feature type="binding site" evidence="1">
    <location>
        <position position="246"/>
    </location>
    <ligand>
        <name>Mn(2+)</name>
        <dbReference type="ChEBI" id="CHEBI:29035"/>
        <label>2</label>
    </ligand>
</feature>
<feature type="binding site" evidence="1">
    <location>
        <position position="257"/>
    </location>
    <ligand>
        <name>Mn(2+)</name>
        <dbReference type="ChEBI" id="CHEBI:29035"/>
        <label>1</label>
    </ligand>
</feature>
<feature type="binding site" evidence="1">
    <location>
        <position position="257"/>
    </location>
    <ligand>
        <name>Mn(2+)</name>
        <dbReference type="ChEBI" id="CHEBI:29035"/>
        <label>2</label>
    </ligand>
</feature>
<feature type="binding site" evidence="1">
    <location>
        <position position="339"/>
    </location>
    <ligand>
        <name>Mn(2+)</name>
        <dbReference type="ChEBI" id="CHEBI:29035"/>
        <label>1</label>
    </ligand>
</feature>
<feature type="binding site" evidence="1">
    <location>
        <position position="384"/>
    </location>
    <ligand>
        <name>Mn(2+)</name>
        <dbReference type="ChEBI" id="CHEBI:29035"/>
        <label>1</label>
    </ligand>
</feature>
<feature type="binding site" evidence="1">
    <location>
        <position position="423"/>
    </location>
    <ligand>
        <name>Mn(2+)</name>
        <dbReference type="ChEBI" id="CHEBI:29035"/>
        <label>1</label>
    </ligand>
</feature>
<feature type="binding site" evidence="1">
    <location>
        <position position="423"/>
    </location>
    <ligand>
        <name>Mn(2+)</name>
        <dbReference type="ChEBI" id="CHEBI:29035"/>
        <label>2</label>
    </ligand>
</feature>
<organism>
    <name type="scientific">Salmonella dublin (strain CT_02021853)</name>
    <dbReference type="NCBI Taxonomy" id="439851"/>
    <lineage>
        <taxon>Bacteria</taxon>
        <taxon>Pseudomonadati</taxon>
        <taxon>Pseudomonadota</taxon>
        <taxon>Gammaproteobacteria</taxon>
        <taxon>Enterobacterales</taxon>
        <taxon>Enterobacteriaceae</taxon>
        <taxon>Salmonella</taxon>
    </lineage>
</organism>
<accession>B5FNX9</accession>
<sequence>MESLAALYKNHIVTLQERTRDVLARFKLDALLIHSGELFNVFLDDHPYPFKVNPQFKAWVPVTQVPNCWLLVDGVNKPKLWFYLPVDYWHNVEPLPTSFWTEEVEVVALPKADGIGSQLPAARGNIGYIGPVPERALQLDIAASNINPKGVIDYLHYYRAYKTDYELACMREAQKMAVSGHRAAEEAFRSGMSEFDINLAYLTATGHRDTDVPYSNIVALNEHAAVLHYTKLDHQAPSEMRSFLLDAGAEYNGYAADLTRTWSAKSDNDYAHLVKDVNDEQLALIATMKAGVSYVDYHIQFHQRIAKLLRKHQIITDMSEEAMVENDLTGPFMPHGIGHPLGLQVHDVAGFMQDDSGTHLAAPSKYPYLRCTRVLQPRMVLTIEPGIYFIESLLAPWREGPFSKHFNWQKIEALKPFGGIRIEDNVVIHENGVENMTRDLKLA</sequence>
<evidence type="ECO:0000255" key="1">
    <source>
        <dbReference type="HAMAP-Rule" id="MF_01279"/>
    </source>
</evidence>
<gene>
    <name evidence="1" type="primary">pepQ</name>
    <name type="ordered locus">SeD_A4370</name>
</gene>
<keyword id="KW-0224">Dipeptidase</keyword>
<keyword id="KW-0378">Hydrolase</keyword>
<keyword id="KW-0464">Manganese</keyword>
<keyword id="KW-0479">Metal-binding</keyword>
<keyword id="KW-0482">Metalloprotease</keyword>
<keyword id="KW-0645">Protease</keyword>
<proteinExistence type="inferred from homology"/>
<reference key="1">
    <citation type="journal article" date="2011" name="J. Bacteriol.">
        <title>Comparative genomics of 28 Salmonella enterica isolates: evidence for CRISPR-mediated adaptive sublineage evolution.</title>
        <authorList>
            <person name="Fricke W.F."/>
            <person name="Mammel M.K."/>
            <person name="McDermott P.F."/>
            <person name="Tartera C."/>
            <person name="White D.G."/>
            <person name="Leclerc J.E."/>
            <person name="Ravel J."/>
            <person name="Cebula T.A."/>
        </authorList>
    </citation>
    <scope>NUCLEOTIDE SEQUENCE [LARGE SCALE GENOMIC DNA]</scope>
    <source>
        <strain>CT_02021853</strain>
    </source>
</reference>
<dbReference type="EC" id="3.4.13.9" evidence="1"/>
<dbReference type="EMBL" id="CP001144">
    <property type="protein sequence ID" value="ACH74434.1"/>
    <property type="molecule type" value="Genomic_DNA"/>
</dbReference>
<dbReference type="RefSeq" id="WP_000444529.1">
    <property type="nucleotide sequence ID" value="NC_011205.1"/>
</dbReference>
<dbReference type="SMR" id="B5FNX9"/>
<dbReference type="MEROPS" id="M24.003"/>
<dbReference type="KEGG" id="sed:SeD_A4370"/>
<dbReference type="HOGENOM" id="CLU_050675_0_0_6"/>
<dbReference type="Proteomes" id="UP000008322">
    <property type="component" value="Chromosome"/>
</dbReference>
<dbReference type="GO" id="GO:0005829">
    <property type="term" value="C:cytosol"/>
    <property type="evidence" value="ECO:0007669"/>
    <property type="project" value="TreeGrafter"/>
</dbReference>
<dbReference type="GO" id="GO:0004177">
    <property type="term" value="F:aminopeptidase activity"/>
    <property type="evidence" value="ECO:0007669"/>
    <property type="project" value="TreeGrafter"/>
</dbReference>
<dbReference type="GO" id="GO:0046872">
    <property type="term" value="F:metal ion binding"/>
    <property type="evidence" value="ECO:0007669"/>
    <property type="project" value="UniProtKB-KW"/>
</dbReference>
<dbReference type="GO" id="GO:0008235">
    <property type="term" value="F:metalloexopeptidase activity"/>
    <property type="evidence" value="ECO:0007669"/>
    <property type="project" value="UniProtKB-UniRule"/>
</dbReference>
<dbReference type="GO" id="GO:0016795">
    <property type="term" value="F:phosphoric triester hydrolase activity"/>
    <property type="evidence" value="ECO:0007669"/>
    <property type="project" value="InterPro"/>
</dbReference>
<dbReference type="GO" id="GO:0102009">
    <property type="term" value="F:proline dipeptidase activity"/>
    <property type="evidence" value="ECO:0007669"/>
    <property type="project" value="UniProtKB-EC"/>
</dbReference>
<dbReference type="GO" id="GO:0006508">
    <property type="term" value="P:proteolysis"/>
    <property type="evidence" value="ECO:0007669"/>
    <property type="project" value="UniProtKB-KW"/>
</dbReference>
<dbReference type="CDD" id="cd01087">
    <property type="entry name" value="Prolidase"/>
    <property type="match status" value="1"/>
</dbReference>
<dbReference type="FunFam" id="3.40.350.10:FF:000002">
    <property type="entry name" value="Xaa-Pro dipeptidase"/>
    <property type="match status" value="1"/>
</dbReference>
<dbReference type="FunFam" id="3.90.230.10:FF:000006">
    <property type="entry name" value="Xaa-Pro dipeptidase"/>
    <property type="match status" value="1"/>
</dbReference>
<dbReference type="Gene3D" id="3.90.230.10">
    <property type="entry name" value="Creatinase/methionine aminopeptidase superfamily"/>
    <property type="match status" value="1"/>
</dbReference>
<dbReference type="Gene3D" id="3.40.350.10">
    <property type="entry name" value="Creatinase/prolidase N-terminal domain"/>
    <property type="match status" value="1"/>
</dbReference>
<dbReference type="HAMAP" id="MF_01279">
    <property type="entry name" value="X_Pro_dipeptid"/>
    <property type="match status" value="1"/>
</dbReference>
<dbReference type="InterPro" id="IPR029149">
    <property type="entry name" value="Creatin/AminoP/Spt16_N"/>
</dbReference>
<dbReference type="InterPro" id="IPR036005">
    <property type="entry name" value="Creatinase/aminopeptidase-like"/>
</dbReference>
<dbReference type="InterPro" id="IPR048819">
    <property type="entry name" value="PepQ_N"/>
</dbReference>
<dbReference type="InterPro" id="IPR000994">
    <property type="entry name" value="Pept_M24"/>
</dbReference>
<dbReference type="InterPro" id="IPR001131">
    <property type="entry name" value="Peptidase_M24B_aminopep-P_CS"/>
</dbReference>
<dbReference type="InterPro" id="IPR052433">
    <property type="entry name" value="X-Pro_dipept-like"/>
</dbReference>
<dbReference type="InterPro" id="IPR022846">
    <property type="entry name" value="X_Pro_dipept"/>
</dbReference>
<dbReference type="NCBIfam" id="NF010133">
    <property type="entry name" value="PRK13607.1"/>
    <property type="match status" value="1"/>
</dbReference>
<dbReference type="PANTHER" id="PTHR43226">
    <property type="entry name" value="XAA-PRO AMINOPEPTIDASE 3"/>
    <property type="match status" value="1"/>
</dbReference>
<dbReference type="PANTHER" id="PTHR43226:SF8">
    <property type="entry name" value="XAA-PRO DIPEPTIDASE"/>
    <property type="match status" value="1"/>
</dbReference>
<dbReference type="Pfam" id="PF21216">
    <property type="entry name" value="PepQ_N"/>
    <property type="match status" value="1"/>
</dbReference>
<dbReference type="Pfam" id="PF00557">
    <property type="entry name" value="Peptidase_M24"/>
    <property type="match status" value="1"/>
</dbReference>
<dbReference type="SUPFAM" id="SSF55920">
    <property type="entry name" value="Creatinase/aminopeptidase"/>
    <property type="match status" value="1"/>
</dbReference>
<dbReference type="PROSITE" id="PS00491">
    <property type="entry name" value="PROLINE_PEPTIDASE"/>
    <property type="match status" value="1"/>
</dbReference>